<keyword id="KW-1185">Reference proteome</keyword>
<keyword id="KW-0687">Ribonucleoprotein</keyword>
<keyword id="KW-0689">Ribosomal protein</keyword>
<accession>Q7N382</accession>
<gene>
    <name evidence="1" type="primary">rpmF</name>
    <name type="ordered locus">plu2837</name>
</gene>
<organism>
    <name type="scientific">Photorhabdus laumondii subsp. laumondii (strain DSM 15139 / CIP 105565 / TT01)</name>
    <name type="common">Photorhabdus luminescens subsp. laumondii</name>
    <dbReference type="NCBI Taxonomy" id="243265"/>
    <lineage>
        <taxon>Bacteria</taxon>
        <taxon>Pseudomonadati</taxon>
        <taxon>Pseudomonadota</taxon>
        <taxon>Gammaproteobacteria</taxon>
        <taxon>Enterobacterales</taxon>
        <taxon>Morganellaceae</taxon>
        <taxon>Photorhabdus</taxon>
    </lineage>
</organism>
<protein>
    <recommendedName>
        <fullName evidence="1">Large ribosomal subunit protein bL32</fullName>
    </recommendedName>
    <alternativeName>
        <fullName evidence="3">50S ribosomal protein L32</fullName>
    </alternativeName>
</protein>
<dbReference type="EMBL" id="BX571868">
    <property type="protein sequence ID" value="CAE15211.1"/>
    <property type="molecule type" value="Genomic_DNA"/>
</dbReference>
<dbReference type="RefSeq" id="WP_011147057.1">
    <property type="nucleotide sequence ID" value="NC_005126.1"/>
</dbReference>
<dbReference type="SMR" id="Q7N382"/>
<dbReference type="STRING" id="243265.plu2837"/>
<dbReference type="GeneID" id="88804854"/>
<dbReference type="KEGG" id="plu:plu2837"/>
<dbReference type="eggNOG" id="COG0333">
    <property type="taxonomic scope" value="Bacteria"/>
</dbReference>
<dbReference type="HOGENOM" id="CLU_129084_2_1_6"/>
<dbReference type="OrthoDB" id="9801927at2"/>
<dbReference type="Proteomes" id="UP000002514">
    <property type="component" value="Chromosome"/>
</dbReference>
<dbReference type="GO" id="GO:0015934">
    <property type="term" value="C:large ribosomal subunit"/>
    <property type="evidence" value="ECO:0007669"/>
    <property type="project" value="InterPro"/>
</dbReference>
<dbReference type="GO" id="GO:0003735">
    <property type="term" value="F:structural constituent of ribosome"/>
    <property type="evidence" value="ECO:0007669"/>
    <property type="project" value="InterPro"/>
</dbReference>
<dbReference type="GO" id="GO:0006412">
    <property type="term" value="P:translation"/>
    <property type="evidence" value="ECO:0007669"/>
    <property type="project" value="UniProtKB-UniRule"/>
</dbReference>
<dbReference type="HAMAP" id="MF_00340">
    <property type="entry name" value="Ribosomal_bL32"/>
    <property type="match status" value="1"/>
</dbReference>
<dbReference type="InterPro" id="IPR002677">
    <property type="entry name" value="Ribosomal_bL32"/>
</dbReference>
<dbReference type="InterPro" id="IPR044957">
    <property type="entry name" value="Ribosomal_bL32_bact"/>
</dbReference>
<dbReference type="InterPro" id="IPR011332">
    <property type="entry name" value="Ribosomal_zn-bd"/>
</dbReference>
<dbReference type="NCBIfam" id="TIGR01031">
    <property type="entry name" value="rpmF_bact"/>
    <property type="match status" value="1"/>
</dbReference>
<dbReference type="PANTHER" id="PTHR35534">
    <property type="entry name" value="50S RIBOSOMAL PROTEIN L32"/>
    <property type="match status" value="1"/>
</dbReference>
<dbReference type="PANTHER" id="PTHR35534:SF1">
    <property type="entry name" value="LARGE RIBOSOMAL SUBUNIT PROTEIN BL32"/>
    <property type="match status" value="1"/>
</dbReference>
<dbReference type="Pfam" id="PF01783">
    <property type="entry name" value="Ribosomal_L32p"/>
    <property type="match status" value="1"/>
</dbReference>
<dbReference type="SUPFAM" id="SSF57829">
    <property type="entry name" value="Zn-binding ribosomal proteins"/>
    <property type="match status" value="1"/>
</dbReference>
<evidence type="ECO:0000255" key="1">
    <source>
        <dbReference type="HAMAP-Rule" id="MF_00340"/>
    </source>
</evidence>
<evidence type="ECO:0000256" key="2">
    <source>
        <dbReference type="SAM" id="MobiDB-lite"/>
    </source>
</evidence>
<evidence type="ECO:0000305" key="3"/>
<feature type="chain" id="PRO_0000172382" description="Large ribosomal subunit protein bL32">
    <location>
        <begin position="1"/>
        <end position="56"/>
    </location>
</feature>
<feature type="region of interest" description="Disordered" evidence="2">
    <location>
        <begin position="1"/>
        <end position="37"/>
    </location>
</feature>
<sequence>MAVQQNKPTRSKRGMRRSHDALTAPLLSVDKTSGETHLRHHVTADGYYRGRKVINK</sequence>
<comment type="similarity">
    <text evidence="1">Belongs to the bacterial ribosomal protein bL32 family.</text>
</comment>
<reference key="1">
    <citation type="journal article" date="2003" name="Nat. Biotechnol.">
        <title>The genome sequence of the entomopathogenic bacterium Photorhabdus luminescens.</title>
        <authorList>
            <person name="Duchaud E."/>
            <person name="Rusniok C."/>
            <person name="Frangeul L."/>
            <person name="Buchrieser C."/>
            <person name="Givaudan A."/>
            <person name="Taourit S."/>
            <person name="Bocs S."/>
            <person name="Boursaux-Eude C."/>
            <person name="Chandler M."/>
            <person name="Charles J.-F."/>
            <person name="Dassa E."/>
            <person name="Derose R."/>
            <person name="Derzelle S."/>
            <person name="Freyssinet G."/>
            <person name="Gaudriault S."/>
            <person name="Medigue C."/>
            <person name="Lanois A."/>
            <person name="Powell K."/>
            <person name="Siguier P."/>
            <person name="Vincent R."/>
            <person name="Wingate V."/>
            <person name="Zouine M."/>
            <person name="Glaser P."/>
            <person name="Boemare N."/>
            <person name="Danchin A."/>
            <person name="Kunst F."/>
        </authorList>
    </citation>
    <scope>NUCLEOTIDE SEQUENCE [LARGE SCALE GENOMIC DNA]</scope>
    <source>
        <strain>DSM 15139 / CIP 105565 / TT01</strain>
    </source>
</reference>
<name>RL32_PHOLL</name>
<proteinExistence type="inferred from homology"/>